<dbReference type="EC" id="3.6.1.59" evidence="2"/>
<dbReference type="EMBL" id="AF398237">
    <property type="protein sequence ID" value="AAM90585.1"/>
    <property type="molecule type" value="mRNA"/>
</dbReference>
<dbReference type="SMR" id="Q8MJJ7"/>
<dbReference type="FunCoup" id="Q8MJJ7">
    <property type="interactions" value="2650"/>
</dbReference>
<dbReference type="STRING" id="9913.ENSBTAP00000003732"/>
<dbReference type="PaxDb" id="9913-ENSBTAP00000003732"/>
<dbReference type="PeptideAtlas" id="Q8MJJ7"/>
<dbReference type="eggNOG" id="KOG3969">
    <property type="taxonomic scope" value="Eukaryota"/>
</dbReference>
<dbReference type="InParanoid" id="Q8MJJ7"/>
<dbReference type="OrthoDB" id="10264956at2759"/>
<dbReference type="Proteomes" id="UP000009136">
    <property type="component" value="Unplaced"/>
</dbReference>
<dbReference type="GO" id="GO:0005737">
    <property type="term" value="C:cytoplasm"/>
    <property type="evidence" value="ECO:0000250"/>
    <property type="project" value="UniProtKB"/>
</dbReference>
<dbReference type="GO" id="GO:0005634">
    <property type="term" value="C:nucleus"/>
    <property type="evidence" value="ECO:0000250"/>
    <property type="project" value="UniProtKB"/>
</dbReference>
<dbReference type="GO" id="GO:0000932">
    <property type="term" value="C:P-body"/>
    <property type="evidence" value="ECO:0000318"/>
    <property type="project" value="GO_Central"/>
</dbReference>
<dbReference type="GO" id="GO:0140932">
    <property type="term" value="F:5'-(N(7)-methyl 5'-triphosphoguanosine)-[mRNA] diphosphatase activity"/>
    <property type="evidence" value="ECO:0000250"/>
    <property type="project" value="UniProtKB"/>
</dbReference>
<dbReference type="GO" id="GO:0000340">
    <property type="term" value="F:RNA 7-methylguanosine cap binding"/>
    <property type="evidence" value="ECO:0000250"/>
    <property type="project" value="UniProtKB"/>
</dbReference>
<dbReference type="GO" id="GO:0000290">
    <property type="term" value="P:deadenylation-dependent decapping of nuclear-transcribed mRNA"/>
    <property type="evidence" value="ECO:0000318"/>
    <property type="project" value="GO_Central"/>
</dbReference>
<dbReference type="GO" id="GO:0045292">
    <property type="term" value="P:mRNA cis splicing, via spliceosome"/>
    <property type="evidence" value="ECO:0000250"/>
    <property type="project" value="UniProtKB"/>
</dbReference>
<dbReference type="FunFam" id="3.30.200.40:FF:000001">
    <property type="entry name" value="m7GpppX diphosphatase"/>
    <property type="match status" value="1"/>
</dbReference>
<dbReference type="FunFam" id="3.30.428.10:FF:000006">
    <property type="entry name" value="m7GpppX diphosphatase"/>
    <property type="match status" value="1"/>
</dbReference>
<dbReference type="Gene3D" id="3.30.428.10">
    <property type="entry name" value="HIT-like"/>
    <property type="match status" value="1"/>
</dbReference>
<dbReference type="Gene3D" id="3.30.200.40">
    <property type="entry name" value="Scavenger mRNA decapping enzyme, N-terminal domain"/>
    <property type="match status" value="1"/>
</dbReference>
<dbReference type="InterPro" id="IPR008594">
    <property type="entry name" value="DcpS/DCS2"/>
</dbReference>
<dbReference type="InterPro" id="IPR019808">
    <property type="entry name" value="Histidine_triad_CS"/>
</dbReference>
<dbReference type="InterPro" id="IPR036265">
    <property type="entry name" value="HIT-like_sf"/>
</dbReference>
<dbReference type="InterPro" id="IPR011145">
    <property type="entry name" value="Scavenger_mRNA_decap_enz_N"/>
</dbReference>
<dbReference type="PANTHER" id="PTHR12978">
    <property type="entry name" value="HISTIDINE TRIAD HIT PROTEIN MEMBER"/>
    <property type="match status" value="1"/>
</dbReference>
<dbReference type="PANTHER" id="PTHR12978:SF0">
    <property type="entry name" value="M7GPPPX DIPHOSPHATASE"/>
    <property type="match status" value="1"/>
</dbReference>
<dbReference type="Pfam" id="PF05652">
    <property type="entry name" value="DcpS"/>
    <property type="match status" value="1"/>
</dbReference>
<dbReference type="Pfam" id="PF11969">
    <property type="entry name" value="DcpS_C"/>
    <property type="match status" value="1"/>
</dbReference>
<dbReference type="PIRSF" id="PIRSF028973">
    <property type="entry name" value="Scavenger_mRNA_decap_enz"/>
    <property type="match status" value="1"/>
</dbReference>
<dbReference type="SUPFAM" id="SSF54197">
    <property type="entry name" value="HIT-like"/>
    <property type="match status" value="1"/>
</dbReference>
<dbReference type="SUPFAM" id="SSF102860">
    <property type="entry name" value="mRNA decapping enzyme DcpS N-terminal domain"/>
    <property type="match status" value="1"/>
</dbReference>
<dbReference type="PROSITE" id="PS00892">
    <property type="entry name" value="HIT_1"/>
    <property type="match status" value="1"/>
</dbReference>
<sequence>MAELAHQQSKRKRELDAEEAEASSTEGEEAGVGNGTSAPVRLPFSGFRVKKVLRESARDKIIFLHGKVNEASGDGDGEDAVVILEKTPFQVDQVAQLLKGSPELQLQFSNDVYSTYHLFPPRQLSDVKTTVVYPATEKHLQKYLRQDLHLVRETGSDYRNVTLPHLESQSLSIQWVYNILDKKAEADRIVFENPDPSDGFVLIPDLKWNQQQLDDLYLIAICHRRGIKSLRDLTAEHLPLLRNILREGQEAILRRYQVAADRLRVYLHYLPSYYHLHVHFTALGFEAPGAGVERAHLLAEVIDNLEQDPEHYQRRTLTFALRADDPLLALLQEAQRS</sequence>
<feature type="initiator methionine" description="Removed" evidence="2">
    <location>
        <position position="1"/>
    </location>
</feature>
<feature type="chain" id="PRO_0000109793" description="m7GpppX diphosphatase">
    <location>
        <begin position="2"/>
        <end position="337"/>
    </location>
</feature>
<feature type="region of interest" description="Disordered" evidence="4">
    <location>
        <begin position="1"/>
        <end position="37"/>
    </location>
</feature>
<feature type="short sequence motif" description="nuclear localization signal (NLS)" evidence="1">
    <location>
        <begin position="10"/>
        <end position="13"/>
    </location>
</feature>
<feature type="short sequence motif" description="nuclear export sequence (NES)" evidence="1">
    <location>
        <begin position="142"/>
        <end position="154"/>
    </location>
</feature>
<feature type="short sequence motif" description="Histidine triad motif" evidence="1">
    <location>
        <begin position="275"/>
        <end position="279"/>
    </location>
</feature>
<feature type="compositionally biased region" description="Acidic residues" evidence="4">
    <location>
        <begin position="16"/>
        <end position="29"/>
    </location>
</feature>
<feature type="active site" description="Nucleophile" evidence="1">
    <location>
        <position position="277"/>
    </location>
</feature>
<feature type="binding site" evidence="1">
    <location>
        <position position="175"/>
    </location>
    <ligand>
        <name>substrate</name>
    </ligand>
</feature>
<feature type="binding site" evidence="1">
    <location>
        <position position="185"/>
    </location>
    <ligand>
        <name>substrate</name>
    </ligand>
</feature>
<feature type="binding site" evidence="1">
    <location>
        <position position="205"/>
    </location>
    <ligand>
        <name>substrate</name>
    </ligand>
</feature>
<feature type="binding site" evidence="1">
    <location>
        <position position="207"/>
    </location>
    <ligand>
        <name>substrate</name>
    </ligand>
</feature>
<feature type="binding site" evidence="1">
    <location>
        <begin position="268"/>
        <end position="279"/>
    </location>
    <ligand>
        <name>substrate</name>
    </ligand>
</feature>
<feature type="modified residue" description="N-acetylalanine" evidence="2">
    <location>
        <position position="2"/>
    </location>
</feature>
<feature type="modified residue" description="Phosphoserine" evidence="2">
    <location>
        <position position="24"/>
    </location>
</feature>
<feature type="modified residue" description="Phosphoserine" evidence="3">
    <location>
        <position position="101"/>
    </location>
</feature>
<feature type="modified residue" description="N6-acetyllysine" evidence="2">
    <location>
        <position position="138"/>
    </location>
</feature>
<feature type="modified residue" description="N6-acetyllysine" evidence="2">
    <location>
        <position position="142"/>
    </location>
</feature>
<organism>
    <name type="scientific">Bos taurus</name>
    <name type="common">Bovine</name>
    <dbReference type="NCBI Taxonomy" id="9913"/>
    <lineage>
        <taxon>Eukaryota</taxon>
        <taxon>Metazoa</taxon>
        <taxon>Chordata</taxon>
        <taxon>Craniata</taxon>
        <taxon>Vertebrata</taxon>
        <taxon>Euteleostomi</taxon>
        <taxon>Mammalia</taxon>
        <taxon>Eutheria</taxon>
        <taxon>Laurasiatheria</taxon>
        <taxon>Artiodactyla</taxon>
        <taxon>Ruminantia</taxon>
        <taxon>Pecora</taxon>
        <taxon>Bovidae</taxon>
        <taxon>Bovinae</taxon>
        <taxon>Bos</taxon>
    </lineage>
</organism>
<name>DCPS_BOVIN</name>
<evidence type="ECO:0000250" key="1"/>
<evidence type="ECO:0000250" key="2">
    <source>
        <dbReference type="UniProtKB" id="Q96C86"/>
    </source>
</evidence>
<evidence type="ECO:0000250" key="3">
    <source>
        <dbReference type="UniProtKB" id="Q9DAR7"/>
    </source>
</evidence>
<evidence type="ECO:0000256" key="4">
    <source>
        <dbReference type="SAM" id="MobiDB-lite"/>
    </source>
</evidence>
<evidence type="ECO:0000305" key="5"/>
<comment type="function">
    <text evidence="1">Decapping scavenger enzyme that catalyzes the cleavage of a residual cap structure following the degradation of mRNAs by 3'-&gt;5' exosome-mediated mRNA decay pathway. Hydrolyzes cap analog structures like 7-methylguanosine nucleoside triphosphate (m7GpppG) with up to 10 nucleotide substrates (small capped oligoribonucleotides) and specifically releases 5'-phosphorylated RNA fragments and 7-methylguanosine monophosphate (m7GMP). Cleaves cap analog structures like tri-methyl guanosine nucleoside triphosphate (m3(2,2,7)GpppG) with very poor efficiency. Does not hydrolyze unmethylated cap analog (GpppG) and shows no decapping activity on intact m7GpppG-capped mRNA molecules longer than 25 nucleotides. Does not hydrolyze 7-methylguanosine diphosphate (m7GDP) to m7GMP. May also play a role in the 5'-&gt;3 mRNA decay pathway; m7GDP, the downstream product released by the 5'-&gt;3' mRNA mediated decapping activity, may be also converted by DCPS to m7GMP. Binds to m7GpppG and strongly to m7GDP. Plays a role in first intron splicing of pre-mRNAs. Inhibits activation-induced cell death.</text>
</comment>
<comment type="catalytic activity">
    <reaction evidence="2">
        <text>a 5'-end (N(7)-methyl 5'-triphosphoguanosine)-ribonucleoside in mRNA + H2O = N(7)-methyl-GMP + a 5'-end diphospho-ribonucleoside in mRNA + 2 H(+)</text>
        <dbReference type="Rhea" id="RHEA:65388"/>
        <dbReference type="Rhea" id="RHEA-COMP:17165"/>
        <dbReference type="Rhea" id="RHEA-COMP:17167"/>
        <dbReference type="ChEBI" id="CHEBI:15377"/>
        <dbReference type="ChEBI" id="CHEBI:15378"/>
        <dbReference type="ChEBI" id="CHEBI:58285"/>
        <dbReference type="ChEBI" id="CHEBI:156461"/>
        <dbReference type="ChEBI" id="CHEBI:167616"/>
        <dbReference type="EC" id="3.6.1.59"/>
    </reaction>
</comment>
<comment type="activity regulation">
    <text evidence="1">The hydrolytic product 7-methylguanosine diphosphate (m7GDP) efficiently inhibits the decapping scavenger activity and acts as a competitive inhibitor in vitro. Inhibited by 2,4-diaminoquinazoline.</text>
</comment>
<comment type="subunit">
    <text evidence="1">Homodimer. Associates with components of the exosome multienzyme ribonuclease complex, such as EXOSC3 and EXOSC4. Interacts with NDOR1.</text>
</comment>
<comment type="subcellular location">
    <subcellularLocation>
        <location evidence="1">Cytoplasm</location>
    </subcellularLocation>
    <subcellularLocation>
        <location evidence="1">Nucleus</location>
    </subcellularLocation>
    <text evidence="1">Predominantly localized in the nucleus. Nucleocytoplasmic shuttling protein that can transiently enter the cytoplasm in mammalian cells in a XPO1/CRM1-dependent manner.</text>
</comment>
<comment type="domain">
    <text evidence="1">The C-terminal histidine triad (HIT) motif and the N-terminal domain are required for the decapping activity. The N-terminus is necessary but not sufficient for binding cap structures.</text>
</comment>
<comment type="similarity">
    <text evidence="5">Belongs to the HIT family.</text>
</comment>
<keyword id="KW-0007">Acetylation</keyword>
<keyword id="KW-0963">Cytoplasm</keyword>
<keyword id="KW-0378">Hydrolase</keyword>
<keyword id="KW-0507">mRNA processing</keyword>
<keyword id="KW-0508">mRNA splicing</keyword>
<keyword id="KW-0539">Nucleus</keyword>
<keyword id="KW-0597">Phosphoprotein</keyword>
<keyword id="KW-1185">Reference proteome</keyword>
<protein>
    <recommendedName>
        <fullName>m7GpppX diphosphatase</fullName>
        <ecNumber evidence="2">3.6.1.59</ecNumber>
    </recommendedName>
    <alternativeName>
        <fullName>DCS-1</fullName>
    </alternativeName>
    <alternativeName>
        <fullName>Decapping scavenger enzyme</fullName>
    </alternativeName>
    <alternativeName>
        <fullName>Hint-related 7meGMP-directed hydrolase</fullName>
    </alternativeName>
    <alternativeName>
        <fullName>Histidine triad nucleotide-binding protein 5</fullName>
    </alternativeName>
    <alternativeName>
        <fullName>Histidine triad protein member 5</fullName>
        <shortName>HINT-5</shortName>
    </alternativeName>
    <alternativeName>
        <fullName>Scavenger mRNA-decapping enzyme DcpS</fullName>
    </alternativeName>
</protein>
<reference key="1">
    <citation type="submission" date="2001-07" db="EMBL/GenBank/DDBJ databases">
        <title>A novel member of the histidine triad protein family with differential polyadenylation (Bovine HINT-5).</title>
        <authorList>
            <person name="Huang C.-H."/>
            <person name="Chen H."/>
            <person name="Peng J."/>
            <person name="Chen Y."/>
        </authorList>
    </citation>
    <scope>NUCLEOTIDE SEQUENCE [MRNA]</scope>
</reference>
<accession>Q8MJJ7</accession>
<gene>
    <name type="primary">DCPS</name>
    <name type="synonym">DCS1</name>
    <name type="synonym">HINT5</name>
</gene>
<proteinExistence type="evidence at transcript level"/>